<name>PSBM_POPAL</name>
<organism>
    <name type="scientific">Populus alba</name>
    <name type="common">White poplar</name>
    <dbReference type="NCBI Taxonomy" id="43335"/>
    <lineage>
        <taxon>Eukaryota</taxon>
        <taxon>Viridiplantae</taxon>
        <taxon>Streptophyta</taxon>
        <taxon>Embryophyta</taxon>
        <taxon>Tracheophyta</taxon>
        <taxon>Spermatophyta</taxon>
        <taxon>Magnoliopsida</taxon>
        <taxon>eudicotyledons</taxon>
        <taxon>Gunneridae</taxon>
        <taxon>Pentapetalae</taxon>
        <taxon>rosids</taxon>
        <taxon>fabids</taxon>
        <taxon>Malpighiales</taxon>
        <taxon>Salicaceae</taxon>
        <taxon>Saliceae</taxon>
        <taxon>Populus</taxon>
    </lineage>
</organism>
<proteinExistence type="inferred from homology"/>
<sequence length="34" mass="3756">MEVNILAFIATALFILVPTAFLLIIYVKTVSQSD</sequence>
<protein>
    <recommendedName>
        <fullName evidence="1">Photosystem II reaction center protein M</fullName>
        <shortName evidence="1">PSII-M</shortName>
    </recommendedName>
</protein>
<keyword id="KW-0150">Chloroplast</keyword>
<keyword id="KW-0472">Membrane</keyword>
<keyword id="KW-0602">Photosynthesis</keyword>
<keyword id="KW-0604">Photosystem II</keyword>
<keyword id="KW-0934">Plastid</keyword>
<keyword id="KW-0674">Reaction center</keyword>
<keyword id="KW-0793">Thylakoid</keyword>
<keyword id="KW-0812">Transmembrane</keyword>
<keyword id="KW-1133">Transmembrane helix</keyword>
<gene>
    <name evidence="1" type="primary">psbM</name>
</gene>
<comment type="function">
    <text evidence="1">One of the components of the core complex of photosystem II (PSII). PSII is a light-driven water:plastoquinone oxidoreductase that uses light energy to abstract electrons from H(2)O, generating O(2) and a proton gradient subsequently used for ATP formation. It consists of a core antenna complex that captures photons, and an electron transfer chain that converts photonic excitation into a charge separation. This subunit is found at the monomer-monomer interface.</text>
</comment>
<comment type="subunit">
    <text evidence="1">PSII is composed of 1 copy each of membrane proteins PsbA, PsbB, PsbC, PsbD, PsbE, PsbF, PsbH, PsbI, PsbJ, PsbK, PsbL, PsbM, PsbT, PsbX, PsbY, PsbZ, Psb30/Ycf12, at least 3 peripheral proteins of the oxygen-evolving complex and a large number of cofactors. It forms dimeric complexes.</text>
</comment>
<comment type="subcellular location">
    <subcellularLocation>
        <location evidence="1">Plastid</location>
        <location evidence="1">Chloroplast thylakoid membrane</location>
        <topology evidence="1">Single-pass membrane protein</topology>
    </subcellularLocation>
</comment>
<comment type="similarity">
    <text evidence="1">Belongs to the PsbM family.</text>
</comment>
<accession>Q14FG3</accession>
<reference key="1">
    <citation type="submission" date="2005-03" db="EMBL/GenBank/DDBJ databases">
        <title>Complete structure of the chloroplast genome of Populus alba.</title>
        <authorList>
            <person name="Okumura S."/>
            <person name="Yamashita A."/>
            <person name="Kanamoto H."/>
            <person name="Hattori M."/>
            <person name="Takase H."/>
            <person name="Tomizawa K."/>
        </authorList>
    </citation>
    <scope>NUCLEOTIDE SEQUENCE [LARGE SCALE GENOMIC DNA]</scope>
</reference>
<geneLocation type="chloroplast"/>
<dbReference type="EMBL" id="AP008956">
    <property type="protein sequence ID" value="BAE97199.1"/>
    <property type="molecule type" value="Genomic_DNA"/>
</dbReference>
<dbReference type="RefSeq" id="YP_665552.1">
    <property type="nucleotide sequence ID" value="NC_008235.1"/>
</dbReference>
<dbReference type="SMR" id="Q14FG3"/>
<dbReference type="GeneID" id="4178169"/>
<dbReference type="KEGG" id="palz:4178169"/>
<dbReference type="OrthoDB" id="22402at3646"/>
<dbReference type="GO" id="GO:0009535">
    <property type="term" value="C:chloroplast thylakoid membrane"/>
    <property type="evidence" value="ECO:0007669"/>
    <property type="project" value="UniProtKB-SubCell"/>
</dbReference>
<dbReference type="GO" id="GO:0009523">
    <property type="term" value="C:photosystem II"/>
    <property type="evidence" value="ECO:0007669"/>
    <property type="project" value="UniProtKB-KW"/>
</dbReference>
<dbReference type="GO" id="GO:0019684">
    <property type="term" value="P:photosynthesis, light reaction"/>
    <property type="evidence" value="ECO:0007669"/>
    <property type="project" value="InterPro"/>
</dbReference>
<dbReference type="HAMAP" id="MF_00438">
    <property type="entry name" value="PSII_PsbM"/>
    <property type="match status" value="1"/>
</dbReference>
<dbReference type="InterPro" id="IPR007826">
    <property type="entry name" value="PSII_PsbM"/>
</dbReference>
<dbReference type="InterPro" id="IPR037269">
    <property type="entry name" value="PSII_PsbM_sf"/>
</dbReference>
<dbReference type="NCBIfam" id="TIGR03038">
    <property type="entry name" value="PS_II_psbM"/>
    <property type="match status" value="1"/>
</dbReference>
<dbReference type="PANTHER" id="PTHR35774">
    <property type="entry name" value="PHOTOSYSTEM II REACTION CENTER PROTEIN M"/>
    <property type="match status" value="1"/>
</dbReference>
<dbReference type="PANTHER" id="PTHR35774:SF1">
    <property type="entry name" value="PHOTOSYSTEM II REACTION CENTER PROTEIN M"/>
    <property type="match status" value="1"/>
</dbReference>
<dbReference type="Pfam" id="PF05151">
    <property type="entry name" value="PsbM"/>
    <property type="match status" value="1"/>
</dbReference>
<dbReference type="SUPFAM" id="SSF161033">
    <property type="entry name" value="Photosystem II reaction center protein M, PsbM"/>
    <property type="match status" value="1"/>
</dbReference>
<evidence type="ECO:0000255" key="1">
    <source>
        <dbReference type="HAMAP-Rule" id="MF_00438"/>
    </source>
</evidence>
<feature type="chain" id="PRO_0000276252" description="Photosystem II reaction center protein M">
    <location>
        <begin position="1"/>
        <end position="34"/>
    </location>
</feature>
<feature type="transmembrane region" description="Helical" evidence="1">
    <location>
        <begin position="5"/>
        <end position="25"/>
    </location>
</feature>